<keyword id="KW-0963">Cytoplasm</keyword>
<keyword id="KW-0648">Protein biosynthesis</keyword>
<keyword id="KW-0663">Pyridoxal phosphate</keyword>
<keyword id="KW-1185">Reference proteome</keyword>
<keyword id="KW-0711">Selenium</keyword>
<keyword id="KW-0808">Transferase</keyword>
<organism>
    <name type="scientific">Escherichia coli O6:H1 (strain CFT073 / ATCC 700928 / UPEC)</name>
    <dbReference type="NCBI Taxonomy" id="199310"/>
    <lineage>
        <taxon>Bacteria</taxon>
        <taxon>Pseudomonadati</taxon>
        <taxon>Pseudomonadota</taxon>
        <taxon>Gammaproteobacteria</taxon>
        <taxon>Enterobacterales</taxon>
        <taxon>Enterobacteriaceae</taxon>
        <taxon>Escherichia</taxon>
    </lineage>
</organism>
<feature type="chain" id="PRO_0000189601" description="L-seryl-tRNA(Sec) selenium transferase">
    <location>
        <begin position="1"/>
        <end position="463"/>
    </location>
</feature>
<feature type="modified residue" description="N6-(pyridoxal phosphate)lysine" evidence="1">
    <location>
        <position position="295"/>
    </location>
</feature>
<sequence>MTTETRSLYSQLPAIDRLLRDSSFLSLRDTYGHTRVVELLRQMLDEAREVIRDSQTLPAWCENWAQEVDARLTKEAQSALRPVINLTGTVLHTNLGRALQAEAAVEAVTKAMRSPVTLEYDLDDAGRGHRDRALAQLLCRITGAEDACIVNNNAAAVLLMLAATASGKEVVVSRGELVEIGGAFRIPDVMRQAGCTLHEVGTTNRTHANDYRQAVNENTALLMKVHTSNYSIQGFTKAIDEAELVALGKELDVPVVTDLGSGSLVDLSQYGLPKEPMPQELIAAGVSLVSFSGDKLLGGPQAGIIVGKKEMIARLQSHPLKRALRADKMTLAALEATLRLYLHPEALSEKLPTLRLLTRSAEVIQIQAQRLQAPLAAHYGAEFAVQVMPCLSQIGSGSLPVDRLPSAALTFTPHDGRGSHLESLAARWRELPVPVIGRIYDGRLWLDLRCLEDEQRFLEMLLK</sequence>
<dbReference type="EC" id="2.9.1.1" evidence="1"/>
<dbReference type="EMBL" id="AE014075">
    <property type="protein sequence ID" value="AAN82848.1"/>
    <property type="molecule type" value="Genomic_DNA"/>
</dbReference>
<dbReference type="RefSeq" id="WP_000206261.1">
    <property type="nucleotide sequence ID" value="NZ_CP051263.1"/>
</dbReference>
<dbReference type="SMR" id="Q8FCC1"/>
<dbReference type="STRING" id="199310.c4412"/>
<dbReference type="KEGG" id="ecc:c4412"/>
<dbReference type="eggNOG" id="COG1921">
    <property type="taxonomic scope" value="Bacteria"/>
</dbReference>
<dbReference type="HOGENOM" id="CLU_038142_1_0_6"/>
<dbReference type="BioCyc" id="ECOL199310:C4412-MONOMER"/>
<dbReference type="UniPathway" id="UPA00906">
    <property type="reaction ID" value="UER00896"/>
</dbReference>
<dbReference type="Proteomes" id="UP000001410">
    <property type="component" value="Chromosome"/>
</dbReference>
<dbReference type="GO" id="GO:0005737">
    <property type="term" value="C:cytoplasm"/>
    <property type="evidence" value="ECO:0007669"/>
    <property type="project" value="UniProtKB-SubCell"/>
</dbReference>
<dbReference type="GO" id="GO:0004125">
    <property type="term" value="F:L-seryl-tRNA(Sec) selenium transferase activity"/>
    <property type="evidence" value="ECO:0007669"/>
    <property type="project" value="UniProtKB-UniRule"/>
</dbReference>
<dbReference type="GO" id="GO:0001717">
    <property type="term" value="P:conversion of seryl-tRNAsec to selenocys-tRNAsec"/>
    <property type="evidence" value="ECO:0007669"/>
    <property type="project" value="UniProtKB-UniRule"/>
</dbReference>
<dbReference type="GO" id="GO:0001514">
    <property type="term" value="P:selenocysteine incorporation"/>
    <property type="evidence" value="ECO:0007669"/>
    <property type="project" value="UniProtKB-UniRule"/>
</dbReference>
<dbReference type="FunFam" id="3.40.640.10:FF:000028">
    <property type="entry name" value="L-seryl-tRNA(Sec) selenium transferase"/>
    <property type="match status" value="1"/>
</dbReference>
<dbReference type="FunFam" id="3.90.1150.180:FF:000001">
    <property type="entry name" value="L-seryl-tRNA(Sec) selenium transferase"/>
    <property type="match status" value="1"/>
</dbReference>
<dbReference type="Gene3D" id="3.90.1150.180">
    <property type="match status" value="1"/>
</dbReference>
<dbReference type="Gene3D" id="3.40.640.10">
    <property type="entry name" value="Type I PLP-dependent aspartate aminotransferase-like (Major domain)"/>
    <property type="match status" value="1"/>
</dbReference>
<dbReference type="HAMAP" id="MF_00423">
    <property type="entry name" value="SelA"/>
    <property type="match status" value="1"/>
</dbReference>
<dbReference type="InterPro" id="IPR015424">
    <property type="entry name" value="PyrdxlP-dep_Trfase"/>
</dbReference>
<dbReference type="InterPro" id="IPR015421">
    <property type="entry name" value="PyrdxlP-dep_Trfase_major"/>
</dbReference>
<dbReference type="InterPro" id="IPR018319">
    <property type="entry name" value="SelA-like"/>
</dbReference>
<dbReference type="InterPro" id="IPR004534">
    <property type="entry name" value="SelA_trans"/>
</dbReference>
<dbReference type="InterPro" id="IPR025862">
    <property type="entry name" value="SelA_trans_N_dom"/>
</dbReference>
<dbReference type="NCBIfam" id="TIGR00474">
    <property type="entry name" value="selA"/>
    <property type="match status" value="1"/>
</dbReference>
<dbReference type="PANTHER" id="PTHR32328">
    <property type="entry name" value="L-SERYL-TRNA(SEC) SELENIUM TRANSFERASE"/>
    <property type="match status" value="1"/>
</dbReference>
<dbReference type="PANTHER" id="PTHR32328:SF0">
    <property type="entry name" value="L-SERYL-TRNA(SEC) SELENIUM TRANSFERASE"/>
    <property type="match status" value="1"/>
</dbReference>
<dbReference type="Pfam" id="PF12390">
    <property type="entry name" value="Se-cys_synth_N"/>
    <property type="match status" value="1"/>
</dbReference>
<dbReference type="Pfam" id="PF03841">
    <property type="entry name" value="SelA"/>
    <property type="match status" value="1"/>
</dbReference>
<dbReference type="SUPFAM" id="SSF53383">
    <property type="entry name" value="PLP-dependent transferases"/>
    <property type="match status" value="1"/>
</dbReference>
<accession>Q8FCC1</accession>
<protein>
    <recommendedName>
        <fullName evidence="1">L-seryl-tRNA(Sec) selenium transferase</fullName>
        <ecNumber evidence="1">2.9.1.1</ecNumber>
    </recommendedName>
    <alternativeName>
        <fullName evidence="1">Selenocysteine synthase</fullName>
        <shortName evidence="1">Sec synthase</shortName>
    </alternativeName>
    <alternativeName>
        <fullName evidence="1">Selenocysteinyl-tRNA(Sec) synthase</fullName>
    </alternativeName>
</protein>
<comment type="function">
    <text evidence="1">Converts seryl-tRNA(Sec) to selenocysteinyl-tRNA(Sec) required for selenoprotein biosynthesis.</text>
</comment>
<comment type="catalytic activity">
    <reaction evidence="1">
        <text>L-seryl-tRNA(Sec) + selenophosphate + H(+) = L-selenocysteinyl-tRNA(Sec) + phosphate</text>
        <dbReference type="Rhea" id="RHEA:22728"/>
        <dbReference type="Rhea" id="RHEA-COMP:9742"/>
        <dbReference type="Rhea" id="RHEA-COMP:9743"/>
        <dbReference type="ChEBI" id="CHEBI:15378"/>
        <dbReference type="ChEBI" id="CHEBI:16144"/>
        <dbReference type="ChEBI" id="CHEBI:43474"/>
        <dbReference type="ChEBI" id="CHEBI:78533"/>
        <dbReference type="ChEBI" id="CHEBI:78573"/>
        <dbReference type="EC" id="2.9.1.1"/>
    </reaction>
</comment>
<comment type="cofactor">
    <cofactor evidence="1">
        <name>pyridoxal 5'-phosphate</name>
        <dbReference type="ChEBI" id="CHEBI:597326"/>
    </cofactor>
</comment>
<comment type="pathway">
    <text evidence="1">Aminoacyl-tRNA biosynthesis; selenocysteinyl-tRNA(Sec) biosynthesis; selenocysteinyl-tRNA(Sec) from L-seryl-tRNA(Sec) (bacterial route): step 1/1.</text>
</comment>
<comment type="subunit">
    <text evidence="1">Homodecamer; pentamer of dimers. Binds only one seryl-tRNA(Sec) per dimer.</text>
</comment>
<comment type="subcellular location">
    <subcellularLocation>
        <location evidence="1">Cytoplasm</location>
    </subcellularLocation>
</comment>
<comment type="similarity">
    <text evidence="1">Belongs to the SelA family.</text>
</comment>
<reference key="1">
    <citation type="journal article" date="2002" name="Proc. Natl. Acad. Sci. U.S.A.">
        <title>Extensive mosaic structure revealed by the complete genome sequence of uropathogenic Escherichia coli.</title>
        <authorList>
            <person name="Welch R.A."/>
            <person name="Burland V."/>
            <person name="Plunkett G. III"/>
            <person name="Redford P."/>
            <person name="Roesch P."/>
            <person name="Rasko D."/>
            <person name="Buckles E.L."/>
            <person name="Liou S.-R."/>
            <person name="Boutin A."/>
            <person name="Hackett J."/>
            <person name="Stroud D."/>
            <person name="Mayhew G.F."/>
            <person name="Rose D.J."/>
            <person name="Zhou S."/>
            <person name="Schwartz D.C."/>
            <person name="Perna N.T."/>
            <person name="Mobley H.L.T."/>
            <person name="Donnenberg M.S."/>
            <person name="Blattner F.R."/>
        </authorList>
    </citation>
    <scope>NUCLEOTIDE SEQUENCE [LARGE SCALE GENOMIC DNA]</scope>
    <source>
        <strain>CFT073 / ATCC 700928 / UPEC</strain>
    </source>
</reference>
<evidence type="ECO:0000255" key="1">
    <source>
        <dbReference type="HAMAP-Rule" id="MF_00423"/>
    </source>
</evidence>
<proteinExistence type="inferred from homology"/>
<gene>
    <name evidence="1" type="primary">selA</name>
    <name type="ordered locus">c4412</name>
</gene>
<name>SELA_ECOL6</name>